<comment type="function">
    <text evidence="1">Catalyzes the reversible oxidation of malate to oxaloacetate.</text>
</comment>
<comment type="catalytic activity">
    <reaction evidence="1">
        <text>(S)-malate + NAD(+) = oxaloacetate + NADH + H(+)</text>
        <dbReference type="Rhea" id="RHEA:21432"/>
        <dbReference type="ChEBI" id="CHEBI:15378"/>
        <dbReference type="ChEBI" id="CHEBI:15589"/>
        <dbReference type="ChEBI" id="CHEBI:16452"/>
        <dbReference type="ChEBI" id="CHEBI:57540"/>
        <dbReference type="ChEBI" id="CHEBI:57945"/>
        <dbReference type="EC" id="1.1.1.37"/>
    </reaction>
</comment>
<comment type="similarity">
    <text evidence="1">Belongs to the LDH/MDH superfamily. MDH type 3 family.</text>
</comment>
<protein>
    <recommendedName>
        <fullName evidence="1">Malate dehydrogenase</fullName>
        <ecNumber evidence="1">1.1.1.37</ecNumber>
    </recommendedName>
</protein>
<feature type="chain" id="PRO_1000191637" description="Malate dehydrogenase">
    <location>
        <begin position="1"/>
        <end position="320"/>
    </location>
</feature>
<feature type="active site" description="Proton acceptor" evidence="1">
    <location>
        <position position="176"/>
    </location>
</feature>
<feature type="binding site" evidence="1">
    <location>
        <begin position="10"/>
        <end position="15"/>
    </location>
    <ligand>
        <name>NAD(+)</name>
        <dbReference type="ChEBI" id="CHEBI:57540"/>
    </ligand>
</feature>
<feature type="binding site" evidence="1">
    <location>
        <position position="34"/>
    </location>
    <ligand>
        <name>NAD(+)</name>
        <dbReference type="ChEBI" id="CHEBI:57540"/>
    </ligand>
</feature>
<feature type="binding site" evidence="1">
    <location>
        <position position="83"/>
    </location>
    <ligand>
        <name>substrate</name>
    </ligand>
</feature>
<feature type="binding site" evidence="1">
    <location>
        <position position="89"/>
    </location>
    <ligand>
        <name>substrate</name>
    </ligand>
</feature>
<feature type="binding site" evidence="1">
    <location>
        <position position="96"/>
    </location>
    <ligand>
        <name>NAD(+)</name>
        <dbReference type="ChEBI" id="CHEBI:57540"/>
    </ligand>
</feature>
<feature type="binding site" evidence="1">
    <location>
        <begin position="119"/>
        <end position="121"/>
    </location>
    <ligand>
        <name>NAD(+)</name>
        <dbReference type="ChEBI" id="CHEBI:57540"/>
    </ligand>
</feature>
<feature type="binding site" evidence="1">
    <location>
        <position position="121"/>
    </location>
    <ligand>
        <name>substrate</name>
    </ligand>
</feature>
<feature type="binding site" evidence="1">
    <location>
        <position position="152"/>
    </location>
    <ligand>
        <name>substrate</name>
    </ligand>
</feature>
<proteinExistence type="inferred from homology"/>
<dbReference type="EC" id="1.1.1.37" evidence="1"/>
<dbReference type="EMBL" id="CP000633">
    <property type="protein sequence ID" value="ACM37987.1"/>
    <property type="molecule type" value="Genomic_DNA"/>
</dbReference>
<dbReference type="RefSeq" id="WP_015917398.1">
    <property type="nucleotide sequence ID" value="NC_011989.1"/>
</dbReference>
<dbReference type="SMR" id="B9JTS9"/>
<dbReference type="STRING" id="311402.Avi_4129"/>
<dbReference type="GeneID" id="60683732"/>
<dbReference type="KEGG" id="avi:Avi_4129"/>
<dbReference type="eggNOG" id="COG0039">
    <property type="taxonomic scope" value="Bacteria"/>
</dbReference>
<dbReference type="HOGENOM" id="CLU_045401_2_1_5"/>
<dbReference type="Proteomes" id="UP000001596">
    <property type="component" value="Chromosome 1"/>
</dbReference>
<dbReference type="GO" id="GO:0004459">
    <property type="term" value="F:L-lactate dehydrogenase activity"/>
    <property type="evidence" value="ECO:0007669"/>
    <property type="project" value="TreeGrafter"/>
</dbReference>
<dbReference type="GO" id="GO:0030060">
    <property type="term" value="F:L-malate dehydrogenase (NAD+) activity"/>
    <property type="evidence" value="ECO:0007669"/>
    <property type="project" value="UniProtKB-UniRule"/>
</dbReference>
<dbReference type="GO" id="GO:0006089">
    <property type="term" value="P:lactate metabolic process"/>
    <property type="evidence" value="ECO:0007669"/>
    <property type="project" value="TreeGrafter"/>
</dbReference>
<dbReference type="GO" id="GO:0006099">
    <property type="term" value="P:tricarboxylic acid cycle"/>
    <property type="evidence" value="ECO:0007669"/>
    <property type="project" value="UniProtKB-UniRule"/>
</dbReference>
<dbReference type="CDD" id="cd01339">
    <property type="entry name" value="LDH-like_MDH"/>
    <property type="match status" value="1"/>
</dbReference>
<dbReference type="FunFam" id="3.40.50.720:FF:000018">
    <property type="entry name" value="Malate dehydrogenase"/>
    <property type="match status" value="1"/>
</dbReference>
<dbReference type="FunFam" id="3.90.110.10:FF:000004">
    <property type="entry name" value="Malate dehydrogenase"/>
    <property type="match status" value="1"/>
</dbReference>
<dbReference type="Gene3D" id="3.90.110.10">
    <property type="entry name" value="Lactate dehydrogenase/glycoside hydrolase, family 4, C-terminal"/>
    <property type="match status" value="1"/>
</dbReference>
<dbReference type="Gene3D" id="3.40.50.720">
    <property type="entry name" value="NAD(P)-binding Rossmann-like Domain"/>
    <property type="match status" value="1"/>
</dbReference>
<dbReference type="HAMAP" id="MF_00487">
    <property type="entry name" value="Malate_dehydrog_3"/>
    <property type="match status" value="1"/>
</dbReference>
<dbReference type="InterPro" id="IPR001557">
    <property type="entry name" value="L-lactate/malate_DH"/>
</dbReference>
<dbReference type="InterPro" id="IPR022383">
    <property type="entry name" value="Lactate/malate_DH_C"/>
</dbReference>
<dbReference type="InterPro" id="IPR001236">
    <property type="entry name" value="Lactate/malate_DH_N"/>
</dbReference>
<dbReference type="InterPro" id="IPR015955">
    <property type="entry name" value="Lactate_DH/Glyco_Ohase_4_C"/>
</dbReference>
<dbReference type="InterPro" id="IPR011275">
    <property type="entry name" value="Malate_DH_type3"/>
</dbReference>
<dbReference type="InterPro" id="IPR036291">
    <property type="entry name" value="NAD(P)-bd_dom_sf"/>
</dbReference>
<dbReference type="NCBIfam" id="TIGR01763">
    <property type="entry name" value="MalateDH_bact"/>
    <property type="match status" value="1"/>
</dbReference>
<dbReference type="NCBIfam" id="NF004863">
    <property type="entry name" value="PRK06223.1"/>
    <property type="match status" value="1"/>
</dbReference>
<dbReference type="PANTHER" id="PTHR43128">
    <property type="entry name" value="L-2-HYDROXYCARBOXYLATE DEHYDROGENASE (NAD(P)(+))"/>
    <property type="match status" value="1"/>
</dbReference>
<dbReference type="PANTHER" id="PTHR43128:SF16">
    <property type="entry name" value="L-LACTATE DEHYDROGENASE"/>
    <property type="match status" value="1"/>
</dbReference>
<dbReference type="Pfam" id="PF02866">
    <property type="entry name" value="Ldh_1_C"/>
    <property type="match status" value="1"/>
</dbReference>
<dbReference type="Pfam" id="PF00056">
    <property type="entry name" value="Ldh_1_N"/>
    <property type="match status" value="1"/>
</dbReference>
<dbReference type="PIRSF" id="PIRSF000102">
    <property type="entry name" value="Lac_mal_DH"/>
    <property type="match status" value="1"/>
</dbReference>
<dbReference type="PRINTS" id="PR00086">
    <property type="entry name" value="LLDHDRGNASE"/>
</dbReference>
<dbReference type="SUPFAM" id="SSF56327">
    <property type="entry name" value="LDH C-terminal domain-like"/>
    <property type="match status" value="1"/>
</dbReference>
<dbReference type="SUPFAM" id="SSF51735">
    <property type="entry name" value="NAD(P)-binding Rossmann-fold domains"/>
    <property type="match status" value="1"/>
</dbReference>
<name>MDH_ALLAM</name>
<keyword id="KW-0520">NAD</keyword>
<keyword id="KW-0560">Oxidoreductase</keyword>
<keyword id="KW-1185">Reference proteome</keyword>
<keyword id="KW-0816">Tricarboxylic acid cycle</keyword>
<evidence type="ECO:0000255" key="1">
    <source>
        <dbReference type="HAMAP-Rule" id="MF_00487"/>
    </source>
</evidence>
<accession>B9JTS9</accession>
<organism>
    <name type="scientific">Allorhizobium ampelinum (strain ATCC BAA-846 / DSM 112012 / S4)</name>
    <name type="common">Agrobacterium vitis (strain S4)</name>
    <dbReference type="NCBI Taxonomy" id="311402"/>
    <lineage>
        <taxon>Bacteria</taxon>
        <taxon>Pseudomonadati</taxon>
        <taxon>Pseudomonadota</taxon>
        <taxon>Alphaproteobacteria</taxon>
        <taxon>Hyphomicrobiales</taxon>
        <taxon>Rhizobiaceae</taxon>
        <taxon>Rhizobium/Agrobacterium group</taxon>
        <taxon>Allorhizobium</taxon>
        <taxon>Allorhizobium ampelinum</taxon>
    </lineage>
</organism>
<reference key="1">
    <citation type="journal article" date="2009" name="J. Bacteriol.">
        <title>Genome sequences of three Agrobacterium biovars help elucidate the evolution of multichromosome genomes in bacteria.</title>
        <authorList>
            <person name="Slater S.C."/>
            <person name="Goldman B.S."/>
            <person name="Goodner B."/>
            <person name="Setubal J.C."/>
            <person name="Farrand S.K."/>
            <person name="Nester E.W."/>
            <person name="Burr T.J."/>
            <person name="Banta L."/>
            <person name="Dickerman A.W."/>
            <person name="Paulsen I."/>
            <person name="Otten L."/>
            <person name="Suen G."/>
            <person name="Welch R."/>
            <person name="Almeida N.F."/>
            <person name="Arnold F."/>
            <person name="Burton O.T."/>
            <person name="Du Z."/>
            <person name="Ewing A."/>
            <person name="Godsy E."/>
            <person name="Heisel S."/>
            <person name="Houmiel K.L."/>
            <person name="Jhaveri J."/>
            <person name="Lu J."/>
            <person name="Miller N.M."/>
            <person name="Norton S."/>
            <person name="Chen Q."/>
            <person name="Phoolcharoen W."/>
            <person name="Ohlin V."/>
            <person name="Ondrusek D."/>
            <person name="Pride N."/>
            <person name="Stricklin S.L."/>
            <person name="Sun J."/>
            <person name="Wheeler C."/>
            <person name="Wilson L."/>
            <person name="Zhu H."/>
            <person name="Wood D.W."/>
        </authorList>
    </citation>
    <scope>NUCLEOTIDE SEQUENCE [LARGE SCALE GENOMIC DNA]</scope>
    <source>
        <strain>ATCC BAA-846 / DSM 112012 / S4</strain>
    </source>
</reference>
<gene>
    <name evidence="1" type="primary">mdh</name>
    <name type="ordered locus">Avi_4129</name>
</gene>
<sequence length="320" mass="33510">MARNKIALIGSGMIGGTLAHLAGLKELGDIVLFDIADGVPQGKGLDIAQSSPVEGFNAKLTGSSDYAAIEGADVCIVTAGVPRKPGMSRDDLLGINLKVMEQVGAGIKKYAPNAFVICITNPLDAMVWALQKFSGLPANKVVGMAGVLDSSRFRLFLAEEFNVSVQDVTAFVLGGHGDTMVPLARYSTVGGIPLTDLVKMGWVTAERLEEIIQRTRDGGAEIVGLLKTGSAFYAPAASAIEMAESYLKDKKRVLPCAAHLTGQYGVKDMYVGVPTVIGAGGVERVIEIELNKDEEAAFQKSVGAVAGLCEACINIAPALK</sequence>